<sequence>MMSNDRKVTEIENSPVTEVRPEEHAWYPDDSALAAPPAATPAAISDQLPSDRYLNRELSWLDFNARVLALAADKSMPLLERAKFLAIFASNLDEFYMVRVAGLKRRDEMGLSVRSADGLTPREQLGRIGEQTQQLASRHARVFLDSVLPALGEEGIYIVTWADLDQAERDRLSTYFNEQVFPVLTPLAVDPAHPFPFVSGLSLNLAVTVRQPEDGTQHFARVKVPDNVDRFVELAAREASEEAAGTEGRTALRFLPMEELIAAFLPVLFPGMEIVEHHAFRITRNADFEVEEDRDEDLLQALERELARRRFGSPVRLEIADDMTESMLELLLRELDVHPGDVIEVPGLLDLSSLWQIYAVDRPTLKDRTFVPATHPAFAERETPKSIFATLREGDVLVHHPYDSFSTSVQRFIEQAAADPNVLAIKQTLYRTSGDSPIVRALIDAAEAGKQVVALVEIKARFDEQANIAWARALEQAGVHVAYGLVGLKTHCKTALVVRREGPTIRRYCHVGTGNYNSKTARLYEDVGLLTAAPDIGADLTDLFNSLTGYSRKLSYRNLLVAPHGIRAGIIDRVEREVAAHRAEGAHNGKGRIRLKMNALVDEQVIDALYRASRAGVRIEVVVRGICALRPGAQGISENIIVRSILGRFLEHSRILHFRAIDEFWIGSADMMHRNLDRRVEVMAQVKNPRLTAQLDELFESALDPCTRCWELGPDGQWTASPQEGHSVRDHQESLMERHRSP</sequence>
<accession>A5U6Z5</accession>
<gene>
    <name evidence="1" type="primary">ppk</name>
    <name type="ordered locus">MRA_3013</name>
</gene>
<feature type="chain" id="PRO_1000079367" description="Polyphosphate kinase">
    <location>
        <begin position="1"/>
        <end position="742"/>
    </location>
</feature>
<feature type="region of interest" description="Disordered" evidence="2">
    <location>
        <begin position="718"/>
        <end position="742"/>
    </location>
</feature>
<feature type="compositionally biased region" description="Basic and acidic residues" evidence="2">
    <location>
        <begin position="726"/>
        <end position="742"/>
    </location>
</feature>
<feature type="active site" description="Phosphohistidine intermediate" evidence="1">
    <location>
        <position position="491"/>
    </location>
</feature>
<feature type="binding site" evidence="1">
    <location>
        <position position="91"/>
    </location>
    <ligand>
        <name>ATP</name>
        <dbReference type="ChEBI" id="CHEBI:30616"/>
    </ligand>
</feature>
<feature type="binding site" evidence="1">
    <location>
        <position position="431"/>
    </location>
    <ligand>
        <name>Mg(2+)</name>
        <dbReference type="ChEBI" id="CHEBI:18420"/>
    </ligand>
</feature>
<feature type="binding site" evidence="1">
    <location>
        <position position="461"/>
    </location>
    <ligand>
        <name>Mg(2+)</name>
        <dbReference type="ChEBI" id="CHEBI:18420"/>
    </ligand>
</feature>
<feature type="binding site" evidence="1">
    <location>
        <position position="524"/>
    </location>
    <ligand>
        <name>ATP</name>
        <dbReference type="ChEBI" id="CHEBI:30616"/>
    </ligand>
</feature>
<feature type="binding site" evidence="1">
    <location>
        <position position="624"/>
    </location>
    <ligand>
        <name>ATP</name>
        <dbReference type="ChEBI" id="CHEBI:30616"/>
    </ligand>
</feature>
<feature type="binding site" evidence="1">
    <location>
        <position position="652"/>
    </location>
    <ligand>
        <name>ATP</name>
        <dbReference type="ChEBI" id="CHEBI:30616"/>
    </ligand>
</feature>
<protein>
    <recommendedName>
        <fullName evidence="1">Polyphosphate kinase</fullName>
        <ecNumber evidence="1">2.7.4.1</ecNumber>
    </recommendedName>
    <alternativeName>
        <fullName evidence="1">ATP-polyphosphate phosphotransferase</fullName>
    </alternativeName>
    <alternativeName>
        <fullName evidence="1">Polyphosphoric acid kinase</fullName>
    </alternativeName>
</protein>
<evidence type="ECO:0000255" key="1">
    <source>
        <dbReference type="HAMAP-Rule" id="MF_00347"/>
    </source>
</evidence>
<evidence type="ECO:0000256" key="2">
    <source>
        <dbReference type="SAM" id="MobiDB-lite"/>
    </source>
</evidence>
<organism>
    <name type="scientific">Mycobacterium tuberculosis (strain ATCC 25177 / H37Ra)</name>
    <dbReference type="NCBI Taxonomy" id="419947"/>
    <lineage>
        <taxon>Bacteria</taxon>
        <taxon>Bacillati</taxon>
        <taxon>Actinomycetota</taxon>
        <taxon>Actinomycetes</taxon>
        <taxon>Mycobacteriales</taxon>
        <taxon>Mycobacteriaceae</taxon>
        <taxon>Mycobacterium</taxon>
        <taxon>Mycobacterium tuberculosis complex</taxon>
    </lineage>
</organism>
<proteinExistence type="inferred from homology"/>
<keyword id="KW-0067">ATP-binding</keyword>
<keyword id="KW-0418">Kinase</keyword>
<keyword id="KW-0460">Magnesium</keyword>
<keyword id="KW-0479">Metal-binding</keyword>
<keyword id="KW-0547">Nucleotide-binding</keyword>
<keyword id="KW-0597">Phosphoprotein</keyword>
<keyword id="KW-1185">Reference proteome</keyword>
<keyword id="KW-0808">Transferase</keyword>
<comment type="function">
    <text evidence="1">Catalyzes the reversible transfer of the terminal phosphate of ATP to form a long-chain polyphosphate (polyP).</text>
</comment>
<comment type="catalytic activity">
    <reaction evidence="1">
        <text>[phosphate](n) + ATP = [phosphate](n+1) + ADP</text>
        <dbReference type="Rhea" id="RHEA:19573"/>
        <dbReference type="Rhea" id="RHEA-COMP:9859"/>
        <dbReference type="Rhea" id="RHEA-COMP:14280"/>
        <dbReference type="ChEBI" id="CHEBI:16838"/>
        <dbReference type="ChEBI" id="CHEBI:30616"/>
        <dbReference type="ChEBI" id="CHEBI:456216"/>
        <dbReference type="EC" id="2.7.4.1"/>
    </reaction>
</comment>
<comment type="cofactor">
    <cofactor evidence="1">
        <name>Mg(2+)</name>
        <dbReference type="ChEBI" id="CHEBI:18420"/>
    </cofactor>
</comment>
<comment type="PTM">
    <text evidence="1">An intermediate of this reaction is the autophosphorylated ppk in which a phosphate is covalently linked to a histidine residue through a N-P bond.</text>
</comment>
<comment type="similarity">
    <text evidence="1">Belongs to the polyphosphate kinase 1 (PPK1) family.</text>
</comment>
<name>PPK1_MYCTA</name>
<dbReference type="EC" id="2.7.4.1" evidence="1"/>
<dbReference type="EMBL" id="CP000611">
    <property type="protein sequence ID" value="ABQ74795.1"/>
    <property type="molecule type" value="Genomic_DNA"/>
</dbReference>
<dbReference type="RefSeq" id="WP_003415097.1">
    <property type="nucleotide sequence ID" value="NZ_CP016972.1"/>
</dbReference>
<dbReference type="SMR" id="A5U6Z5"/>
<dbReference type="KEGG" id="mra:MRA_3013"/>
<dbReference type="eggNOG" id="COG0855">
    <property type="taxonomic scope" value="Bacteria"/>
</dbReference>
<dbReference type="HOGENOM" id="CLU_009678_5_0_11"/>
<dbReference type="Proteomes" id="UP000001988">
    <property type="component" value="Chromosome"/>
</dbReference>
<dbReference type="GO" id="GO:0009358">
    <property type="term" value="C:polyphosphate kinase complex"/>
    <property type="evidence" value="ECO:0007669"/>
    <property type="project" value="InterPro"/>
</dbReference>
<dbReference type="GO" id="GO:0005524">
    <property type="term" value="F:ATP binding"/>
    <property type="evidence" value="ECO:0007669"/>
    <property type="project" value="UniProtKB-KW"/>
</dbReference>
<dbReference type="GO" id="GO:0046872">
    <property type="term" value="F:metal ion binding"/>
    <property type="evidence" value="ECO:0007669"/>
    <property type="project" value="UniProtKB-KW"/>
</dbReference>
<dbReference type="GO" id="GO:0008976">
    <property type="term" value="F:polyphosphate kinase activity"/>
    <property type="evidence" value="ECO:0007669"/>
    <property type="project" value="UniProtKB-UniRule"/>
</dbReference>
<dbReference type="GO" id="GO:0006799">
    <property type="term" value="P:polyphosphate biosynthetic process"/>
    <property type="evidence" value="ECO:0007669"/>
    <property type="project" value="UniProtKB-UniRule"/>
</dbReference>
<dbReference type="CDD" id="cd09165">
    <property type="entry name" value="PLDc_PaPPK1_C1_like"/>
    <property type="match status" value="1"/>
</dbReference>
<dbReference type="FunFam" id="1.20.58.310:FF:000002">
    <property type="entry name" value="Polyphosphate kinase"/>
    <property type="match status" value="1"/>
</dbReference>
<dbReference type="FunFam" id="3.30.1840.10:FF:000002">
    <property type="entry name" value="Polyphosphate kinase"/>
    <property type="match status" value="1"/>
</dbReference>
<dbReference type="FunFam" id="3.30.870.10:FF:000001">
    <property type="entry name" value="Polyphosphate kinase"/>
    <property type="match status" value="1"/>
</dbReference>
<dbReference type="Gene3D" id="3.30.870.10">
    <property type="entry name" value="Endonuclease Chain A"/>
    <property type="match status" value="2"/>
</dbReference>
<dbReference type="Gene3D" id="3.30.1840.10">
    <property type="entry name" value="Polyphosphate kinase middle domain"/>
    <property type="match status" value="1"/>
</dbReference>
<dbReference type="Gene3D" id="1.20.58.310">
    <property type="entry name" value="Polyphosphate kinase N-terminal domain"/>
    <property type="match status" value="1"/>
</dbReference>
<dbReference type="HAMAP" id="MF_00347">
    <property type="entry name" value="Polyphosphate_kinase"/>
    <property type="match status" value="1"/>
</dbReference>
<dbReference type="InterPro" id="IPR003414">
    <property type="entry name" value="PP_kinase"/>
</dbReference>
<dbReference type="InterPro" id="IPR041108">
    <property type="entry name" value="PP_kinase_C_1"/>
</dbReference>
<dbReference type="InterPro" id="IPR024953">
    <property type="entry name" value="PP_kinase_middle"/>
</dbReference>
<dbReference type="InterPro" id="IPR036830">
    <property type="entry name" value="PP_kinase_middle_dom_sf"/>
</dbReference>
<dbReference type="InterPro" id="IPR025200">
    <property type="entry name" value="PPK_C_dom2"/>
</dbReference>
<dbReference type="InterPro" id="IPR025198">
    <property type="entry name" value="PPK_N_dom"/>
</dbReference>
<dbReference type="InterPro" id="IPR036832">
    <property type="entry name" value="PPK_N_dom_sf"/>
</dbReference>
<dbReference type="NCBIfam" id="TIGR03705">
    <property type="entry name" value="poly_P_kin"/>
    <property type="match status" value="1"/>
</dbReference>
<dbReference type="NCBIfam" id="NF003917">
    <property type="entry name" value="PRK05443.1-1"/>
    <property type="match status" value="1"/>
</dbReference>
<dbReference type="NCBIfam" id="NF003918">
    <property type="entry name" value="PRK05443.1-2"/>
    <property type="match status" value="1"/>
</dbReference>
<dbReference type="NCBIfam" id="NF003921">
    <property type="entry name" value="PRK05443.2-2"/>
    <property type="match status" value="1"/>
</dbReference>
<dbReference type="NCBIfam" id="NF003922">
    <property type="entry name" value="PRK05443.2-3"/>
    <property type="match status" value="1"/>
</dbReference>
<dbReference type="PANTHER" id="PTHR30218">
    <property type="entry name" value="POLYPHOSPHATE KINASE"/>
    <property type="match status" value="1"/>
</dbReference>
<dbReference type="PANTHER" id="PTHR30218:SF0">
    <property type="entry name" value="POLYPHOSPHATE KINASE"/>
    <property type="match status" value="1"/>
</dbReference>
<dbReference type="Pfam" id="PF02503">
    <property type="entry name" value="PP_kinase"/>
    <property type="match status" value="1"/>
</dbReference>
<dbReference type="Pfam" id="PF13090">
    <property type="entry name" value="PP_kinase_C"/>
    <property type="match status" value="1"/>
</dbReference>
<dbReference type="Pfam" id="PF17941">
    <property type="entry name" value="PP_kinase_C_1"/>
    <property type="match status" value="1"/>
</dbReference>
<dbReference type="Pfam" id="PF13089">
    <property type="entry name" value="PP_kinase_N"/>
    <property type="match status" value="1"/>
</dbReference>
<dbReference type="PIRSF" id="PIRSF015589">
    <property type="entry name" value="PP_kinase"/>
    <property type="match status" value="1"/>
</dbReference>
<dbReference type="SUPFAM" id="SSF56024">
    <property type="entry name" value="Phospholipase D/nuclease"/>
    <property type="match status" value="2"/>
</dbReference>
<dbReference type="SUPFAM" id="SSF143724">
    <property type="entry name" value="PHP14-like"/>
    <property type="match status" value="1"/>
</dbReference>
<dbReference type="SUPFAM" id="SSF140356">
    <property type="entry name" value="PPK N-terminal domain-like"/>
    <property type="match status" value="1"/>
</dbReference>
<reference key="1">
    <citation type="journal article" date="2008" name="PLoS ONE">
        <title>Genetic basis of virulence attenuation revealed by comparative genomic analysis of Mycobacterium tuberculosis strain H37Ra versus H37Rv.</title>
        <authorList>
            <person name="Zheng H."/>
            <person name="Lu L."/>
            <person name="Wang B."/>
            <person name="Pu S."/>
            <person name="Zhang X."/>
            <person name="Zhu G."/>
            <person name="Shi W."/>
            <person name="Zhang L."/>
            <person name="Wang H."/>
            <person name="Wang S."/>
            <person name="Zhao G."/>
            <person name="Zhang Y."/>
        </authorList>
    </citation>
    <scope>NUCLEOTIDE SEQUENCE [LARGE SCALE GENOMIC DNA]</scope>
    <source>
        <strain>ATCC 25177 / H37Ra</strain>
    </source>
</reference>